<organism>
    <name type="scientific">Bacillus subtilis (strain 168)</name>
    <dbReference type="NCBI Taxonomy" id="224308"/>
    <lineage>
        <taxon>Bacteria</taxon>
        <taxon>Bacillati</taxon>
        <taxon>Bacillota</taxon>
        <taxon>Bacilli</taxon>
        <taxon>Bacillales</taxon>
        <taxon>Bacillaceae</taxon>
        <taxon>Bacillus</taxon>
    </lineage>
</organism>
<keyword id="KW-0002">3D-structure</keyword>
<keyword id="KW-1003">Cell membrane</keyword>
<keyword id="KW-0449">Lipoprotein</keyword>
<keyword id="KW-0472">Membrane</keyword>
<keyword id="KW-0564">Palmitate</keyword>
<keyword id="KW-1185">Reference proteome</keyword>
<keyword id="KW-0732">Signal</keyword>
<keyword id="KW-0813">Transport</keyword>
<protein>
    <recommendedName>
        <fullName>Probable ABC transporter extracellular-binding protein YckB</fullName>
    </recommendedName>
    <alternativeName>
        <fullName>ORF2</fullName>
    </alternativeName>
</protein>
<evidence type="ECO:0000255" key="1">
    <source>
        <dbReference type="PROSITE-ProRule" id="PRU00303"/>
    </source>
</evidence>
<evidence type="ECO:0000305" key="2"/>
<evidence type="ECO:0007829" key="3">
    <source>
        <dbReference type="PDB" id="2IEE"/>
    </source>
</evidence>
<feature type="signal peptide" evidence="1">
    <location>
        <begin position="1"/>
        <end position="24"/>
    </location>
</feature>
<feature type="chain" id="PRO_0000031777" description="Probable ABC transporter extracellular-binding protein YckB">
    <location>
        <begin position="25"/>
        <end position="287"/>
    </location>
</feature>
<feature type="lipid moiety-binding region" description="N-palmitoyl cysteine" evidence="2">
    <location>
        <position position="25"/>
    </location>
</feature>
<feature type="lipid moiety-binding region" description="S-diacylglycerol cysteine" evidence="2">
    <location>
        <position position="25"/>
    </location>
</feature>
<feature type="helix" evidence="3">
    <location>
        <begin position="38"/>
        <end position="44"/>
    </location>
</feature>
<feature type="strand" evidence="3">
    <location>
        <begin position="46"/>
        <end position="51"/>
    </location>
</feature>
<feature type="turn" evidence="3">
    <location>
        <begin position="56"/>
        <end position="58"/>
    </location>
</feature>
<feature type="strand" evidence="3">
    <location>
        <begin position="59"/>
        <end position="61"/>
    </location>
</feature>
<feature type="turn" evidence="3">
    <location>
        <begin position="63"/>
        <end position="66"/>
    </location>
</feature>
<feature type="helix" evidence="3">
    <location>
        <begin position="73"/>
        <end position="84"/>
    </location>
</feature>
<feature type="strand" evidence="3">
    <location>
        <begin position="88"/>
        <end position="93"/>
    </location>
</feature>
<feature type="helix" evidence="3">
    <location>
        <begin position="99"/>
        <end position="104"/>
    </location>
</feature>
<feature type="strand" evidence="3">
    <location>
        <begin position="107"/>
        <end position="111"/>
    </location>
</feature>
<feature type="helix" evidence="3">
    <location>
        <begin position="119"/>
        <end position="122"/>
    </location>
</feature>
<feature type="strand" evidence="3">
    <location>
        <begin position="125"/>
        <end position="127"/>
    </location>
</feature>
<feature type="strand" evidence="3">
    <location>
        <begin position="131"/>
        <end position="140"/>
    </location>
</feature>
<feature type="turn" evidence="3">
    <location>
        <begin position="142"/>
        <end position="144"/>
    </location>
</feature>
<feature type="helix" evidence="3">
    <location>
        <begin position="145"/>
        <end position="147"/>
    </location>
</feature>
<feature type="helix" evidence="3">
    <location>
        <begin position="151"/>
        <end position="154"/>
    </location>
</feature>
<feature type="strand" evidence="3">
    <location>
        <begin position="158"/>
        <end position="161"/>
    </location>
</feature>
<feature type="helix" evidence="3">
    <location>
        <begin position="166"/>
        <end position="173"/>
    </location>
</feature>
<feature type="strand" evidence="3">
    <location>
        <begin position="177"/>
        <end position="180"/>
    </location>
</feature>
<feature type="helix" evidence="3">
    <location>
        <begin position="186"/>
        <end position="194"/>
    </location>
</feature>
<feature type="strand" evidence="3">
    <location>
        <begin position="200"/>
        <end position="204"/>
    </location>
</feature>
<feature type="helix" evidence="3">
    <location>
        <begin position="205"/>
        <end position="214"/>
    </location>
</feature>
<feature type="strand" evidence="3">
    <location>
        <begin position="228"/>
        <end position="233"/>
    </location>
</feature>
<feature type="strand" evidence="3">
    <location>
        <begin position="236"/>
        <end position="238"/>
    </location>
</feature>
<feature type="helix" evidence="3">
    <location>
        <begin position="242"/>
        <end position="257"/>
    </location>
</feature>
<feature type="helix" evidence="3">
    <location>
        <begin position="260"/>
        <end position="268"/>
    </location>
</feature>
<feature type="turn" evidence="3">
    <location>
        <begin position="269"/>
        <end position="271"/>
    </location>
</feature>
<sequence length="287" mass="31720">MKSFMHSKAVIFSFTMAFFLILAACSGKNEADSKDTGWEQIKDKGKIVVATSGTLYPTSYHDTDSGSDKLTGYEVEVVREAAKRLGLKVEFKEMGIDGMLTAVNSGQVDAAANDIDVTKDREEKFAFSTPYKYSYGTAIVRKDDLSGIKTLKDLKGKKAAGAATTVYMEVARKYGAKEVIYDNATNEQYLKDVANGRTDVILNDYYLQTLALAAFPDLNITIHPDIKYMPNKQALVMKKSNAALQKKMNEALKEMSKDGSLTKLSKQFFNKADVSKKIDADVQDVDL</sequence>
<comment type="function">
    <text>Probably part of a binding-protein-dependent transport system.</text>
</comment>
<comment type="subcellular location">
    <subcellularLocation>
        <location evidence="2">Cell membrane</location>
        <topology evidence="2">Lipid-anchor</topology>
    </subcellularLocation>
</comment>
<comment type="similarity">
    <text evidence="2">Belongs to the bacterial solute-binding protein 3 family.</text>
</comment>
<comment type="sequence caution" evidence="2">
    <conflict type="frameshift">
        <sequence resource="EMBL-CDS" id="BAA06426"/>
    </conflict>
</comment>
<proteinExistence type="evidence at protein level"/>
<gene>
    <name type="primary">yckB</name>
    <name type="ordered locus">BSU03380</name>
</gene>
<reference key="1">
    <citation type="journal article" date="1995" name="Microbiology">
        <title>A 10 kb nucleotide sequence at the 5' flanking region (32 degrees) of srfAA of the Bacillus subtilis chromosome.</title>
        <authorList>
            <person name="Fujishima Y."/>
            <person name="Yamane K."/>
        </authorList>
    </citation>
    <scope>NUCLEOTIDE SEQUENCE [GENOMIC DNA]</scope>
    <source>
        <strain>168</strain>
    </source>
</reference>
<reference key="2">
    <citation type="journal article" date="1997" name="Nature">
        <title>The complete genome sequence of the Gram-positive bacterium Bacillus subtilis.</title>
        <authorList>
            <person name="Kunst F."/>
            <person name="Ogasawara N."/>
            <person name="Moszer I."/>
            <person name="Albertini A.M."/>
            <person name="Alloni G."/>
            <person name="Azevedo V."/>
            <person name="Bertero M.G."/>
            <person name="Bessieres P."/>
            <person name="Bolotin A."/>
            <person name="Borchert S."/>
            <person name="Borriss R."/>
            <person name="Boursier L."/>
            <person name="Brans A."/>
            <person name="Braun M."/>
            <person name="Brignell S.C."/>
            <person name="Bron S."/>
            <person name="Brouillet S."/>
            <person name="Bruschi C.V."/>
            <person name="Caldwell B."/>
            <person name="Capuano V."/>
            <person name="Carter N.M."/>
            <person name="Choi S.-K."/>
            <person name="Codani J.-J."/>
            <person name="Connerton I.F."/>
            <person name="Cummings N.J."/>
            <person name="Daniel R.A."/>
            <person name="Denizot F."/>
            <person name="Devine K.M."/>
            <person name="Duesterhoeft A."/>
            <person name="Ehrlich S.D."/>
            <person name="Emmerson P.T."/>
            <person name="Entian K.-D."/>
            <person name="Errington J."/>
            <person name="Fabret C."/>
            <person name="Ferrari E."/>
            <person name="Foulger D."/>
            <person name="Fritz C."/>
            <person name="Fujita M."/>
            <person name="Fujita Y."/>
            <person name="Fuma S."/>
            <person name="Galizzi A."/>
            <person name="Galleron N."/>
            <person name="Ghim S.-Y."/>
            <person name="Glaser P."/>
            <person name="Goffeau A."/>
            <person name="Golightly E.J."/>
            <person name="Grandi G."/>
            <person name="Guiseppi G."/>
            <person name="Guy B.J."/>
            <person name="Haga K."/>
            <person name="Haiech J."/>
            <person name="Harwood C.R."/>
            <person name="Henaut A."/>
            <person name="Hilbert H."/>
            <person name="Holsappel S."/>
            <person name="Hosono S."/>
            <person name="Hullo M.-F."/>
            <person name="Itaya M."/>
            <person name="Jones L.-M."/>
            <person name="Joris B."/>
            <person name="Karamata D."/>
            <person name="Kasahara Y."/>
            <person name="Klaerr-Blanchard M."/>
            <person name="Klein C."/>
            <person name="Kobayashi Y."/>
            <person name="Koetter P."/>
            <person name="Koningstein G."/>
            <person name="Krogh S."/>
            <person name="Kumano M."/>
            <person name="Kurita K."/>
            <person name="Lapidus A."/>
            <person name="Lardinois S."/>
            <person name="Lauber J."/>
            <person name="Lazarevic V."/>
            <person name="Lee S.-M."/>
            <person name="Levine A."/>
            <person name="Liu H."/>
            <person name="Masuda S."/>
            <person name="Mauel C."/>
            <person name="Medigue C."/>
            <person name="Medina N."/>
            <person name="Mellado R.P."/>
            <person name="Mizuno M."/>
            <person name="Moestl D."/>
            <person name="Nakai S."/>
            <person name="Noback M."/>
            <person name="Noone D."/>
            <person name="O'Reilly M."/>
            <person name="Ogawa K."/>
            <person name="Ogiwara A."/>
            <person name="Oudega B."/>
            <person name="Park S.-H."/>
            <person name="Parro V."/>
            <person name="Pohl T.M."/>
            <person name="Portetelle D."/>
            <person name="Porwollik S."/>
            <person name="Prescott A.M."/>
            <person name="Presecan E."/>
            <person name="Pujic P."/>
            <person name="Purnelle B."/>
            <person name="Rapoport G."/>
            <person name="Rey M."/>
            <person name="Reynolds S."/>
            <person name="Rieger M."/>
            <person name="Rivolta C."/>
            <person name="Rocha E."/>
            <person name="Roche B."/>
            <person name="Rose M."/>
            <person name="Sadaie Y."/>
            <person name="Sato T."/>
            <person name="Scanlan E."/>
            <person name="Schleich S."/>
            <person name="Schroeter R."/>
            <person name="Scoffone F."/>
            <person name="Sekiguchi J."/>
            <person name="Sekowska A."/>
            <person name="Seror S.J."/>
            <person name="Serror P."/>
            <person name="Shin B.-S."/>
            <person name="Soldo B."/>
            <person name="Sorokin A."/>
            <person name="Tacconi E."/>
            <person name="Takagi T."/>
            <person name="Takahashi H."/>
            <person name="Takemaru K."/>
            <person name="Takeuchi M."/>
            <person name="Tamakoshi A."/>
            <person name="Tanaka T."/>
            <person name="Terpstra P."/>
            <person name="Tognoni A."/>
            <person name="Tosato V."/>
            <person name="Uchiyama S."/>
            <person name="Vandenbol M."/>
            <person name="Vannier F."/>
            <person name="Vassarotti A."/>
            <person name="Viari A."/>
            <person name="Wambutt R."/>
            <person name="Wedler E."/>
            <person name="Wedler H."/>
            <person name="Weitzenegger T."/>
            <person name="Winters P."/>
            <person name="Wipat A."/>
            <person name="Yamamoto H."/>
            <person name="Yamane K."/>
            <person name="Yasumoto K."/>
            <person name="Yata K."/>
            <person name="Yoshida K."/>
            <person name="Yoshikawa H.-F."/>
            <person name="Zumstein E."/>
            <person name="Yoshikawa H."/>
            <person name="Danchin A."/>
        </authorList>
    </citation>
    <scope>NUCLEOTIDE SEQUENCE [LARGE SCALE GENOMIC DNA]</scope>
    <source>
        <strain>168</strain>
    </source>
</reference>
<accession>P42400</accession>
<accession>O31476</accession>
<dbReference type="EMBL" id="D30762">
    <property type="protein sequence ID" value="BAA06426.1"/>
    <property type="status" value="ALT_FRAME"/>
    <property type="molecule type" value="Genomic_DNA"/>
</dbReference>
<dbReference type="EMBL" id="AL009126">
    <property type="protein sequence ID" value="CAB12132.1"/>
    <property type="molecule type" value="Genomic_DNA"/>
</dbReference>
<dbReference type="PIR" id="D69760">
    <property type="entry name" value="D69760"/>
</dbReference>
<dbReference type="RefSeq" id="NP_388220.1">
    <property type="nucleotide sequence ID" value="NC_000964.3"/>
</dbReference>
<dbReference type="RefSeq" id="WP_009966510.1">
    <property type="nucleotide sequence ID" value="NZ_OZ025638.1"/>
</dbReference>
<dbReference type="PDB" id="2IEE">
    <property type="method" value="X-ray"/>
    <property type="resolution" value="2.20 A"/>
    <property type="chains" value="A/B=26-287"/>
</dbReference>
<dbReference type="PDBsum" id="2IEE"/>
<dbReference type="SMR" id="P42400"/>
<dbReference type="FunCoup" id="P42400">
    <property type="interactions" value="127"/>
</dbReference>
<dbReference type="STRING" id="224308.BSU03380"/>
<dbReference type="PaxDb" id="224308-BSU03380"/>
<dbReference type="EnsemblBacteria" id="CAB12132">
    <property type="protein sequence ID" value="CAB12132"/>
    <property type="gene ID" value="BSU_03380"/>
</dbReference>
<dbReference type="GeneID" id="938320"/>
<dbReference type="KEGG" id="bsu:BSU03380"/>
<dbReference type="PATRIC" id="fig|224308.43.peg.347"/>
<dbReference type="eggNOG" id="COG0834">
    <property type="taxonomic scope" value="Bacteria"/>
</dbReference>
<dbReference type="InParanoid" id="P42400"/>
<dbReference type="OrthoDB" id="8613538at2"/>
<dbReference type="PhylomeDB" id="P42400"/>
<dbReference type="BioCyc" id="BSUB:BSU03380-MONOMER"/>
<dbReference type="EvolutionaryTrace" id="P42400"/>
<dbReference type="Proteomes" id="UP000001570">
    <property type="component" value="Chromosome"/>
</dbReference>
<dbReference type="GO" id="GO:0005886">
    <property type="term" value="C:plasma membrane"/>
    <property type="evidence" value="ECO:0007669"/>
    <property type="project" value="UniProtKB-SubCell"/>
</dbReference>
<dbReference type="CDD" id="cd01003">
    <property type="entry name" value="PBP2_YckB"/>
    <property type="match status" value="1"/>
</dbReference>
<dbReference type="Gene3D" id="3.40.190.10">
    <property type="entry name" value="Periplasmic binding protein-like II"/>
    <property type="match status" value="2"/>
</dbReference>
<dbReference type="InterPro" id="IPR018313">
    <property type="entry name" value="SBP_3_CS"/>
</dbReference>
<dbReference type="InterPro" id="IPR001638">
    <property type="entry name" value="Solute-binding_3/MltF_N"/>
</dbReference>
<dbReference type="PANTHER" id="PTHR35936:SF34">
    <property type="entry name" value="ABC TRANSPORTER EXTRACELLULAR-BINDING PROTEIN YCKB-RELATED"/>
    <property type="match status" value="1"/>
</dbReference>
<dbReference type="PANTHER" id="PTHR35936">
    <property type="entry name" value="MEMBRANE-BOUND LYTIC MUREIN TRANSGLYCOSYLASE F"/>
    <property type="match status" value="1"/>
</dbReference>
<dbReference type="Pfam" id="PF00497">
    <property type="entry name" value="SBP_bac_3"/>
    <property type="match status" value="1"/>
</dbReference>
<dbReference type="SMART" id="SM00062">
    <property type="entry name" value="PBPb"/>
    <property type="match status" value="1"/>
</dbReference>
<dbReference type="SUPFAM" id="SSF53850">
    <property type="entry name" value="Periplasmic binding protein-like II"/>
    <property type="match status" value="1"/>
</dbReference>
<dbReference type="PROSITE" id="PS51257">
    <property type="entry name" value="PROKAR_LIPOPROTEIN"/>
    <property type="match status" value="1"/>
</dbReference>
<dbReference type="PROSITE" id="PS01039">
    <property type="entry name" value="SBP_BACTERIAL_3"/>
    <property type="match status" value="1"/>
</dbReference>
<name>YCKB_BACSU</name>